<name>PMU1_ARTBC</name>
<evidence type="ECO:0000250" key="1">
    <source>
        <dbReference type="UniProtKB" id="P36069"/>
    </source>
</evidence>
<evidence type="ECO:0000250" key="2">
    <source>
        <dbReference type="UniProtKB" id="P62707"/>
    </source>
</evidence>
<evidence type="ECO:0000255" key="3"/>
<evidence type="ECO:0000269" key="4">
    <source>
    </source>
</evidence>
<evidence type="ECO:0000305" key="5"/>
<dbReference type="EC" id="5.4.-.-" evidence="5"/>
<dbReference type="EMBL" id="ABSU01000035">
    <property type="protein sequence ID" value="EFE29596.1"/>
    <property type="molecule type" value="Genomic_DNA"/>
</dbReference>
<dbReference type="RefSeq" id="XP_003010236.1">
    <property type="nucleotide sequence ID" value="XM_003010190.1"/>
</dbReference>
<dbReference type="SMR" id="D4B4V1"/>
<dbReference type="GeneID" id="9525504"/>
<dbReference type="KEGG" id="abe:ARB_03491"/>
<dbReference type="eggNOG" id="KOG4754">
    <property type="taxonomic scope" value="Eukaryota"/>
</dbReference>
<dbReference type="HOGENOM" id="CLU_039184_0_1_1"/>
<dbReference type="OMA" id="NWVDARL"/>
<dbReference type="OrthoDB" id="496981at2759"/>
<dbReference type="Proteomes" id="UP000008866">
    <property type="component" value="Unassembled WGS sequence"/>
</dbReference>
<dbReference type="GO" id="GO:0005737">
    <property type="term" value="C:cytoplasm"/>
    <property type="evidence" value="ECO:0007669"/>
    <property type="project" value="TreeGrafter"/>
</dbReference>
<dbReference type="GO" id="GO:0005576">
    <property type="term" value="C:extracellular region"/>
    <property type="evidence" value="ECO:0007669"/>
    <property type="project" value="UniProtKB-SubCell"/>
</dbReference>
<dbReference type="GO" id="GO:0016853">
    <property type="term" value="F:isomerase activity"/>
    <property type="evidence" value="ECO:0007669"/>
    <property type="project" value="UniProtKB-KW"/>
</dbReference>
<dbReference type="GO" id="GO:0016791">
    <property type="term" value="F:phosphatase activity"/>
    <property type="evidence" value="ECO:0007669"/>
    <property type="project" value="TreeGrafter"/>
</dbReference>
<dbReference type="CDD" id="cd07067">
    <property type="entry name" value="HP_PGM_like"/>
    <property type="match status" value="1"/>
</dbReference>
<dbReference type="Gene3D" id="3.40.50.1240">
    <property type="entry name" value="Phosphoglycerate mutase-like"/>
    <property type="match status" value="1"/>
</dbReference>
<dbReference type="InterPro" id="IPR013078">
    <property type="entry name" value="His_Pase_superF_clade-1"/>
</dbReference>
<dbReference type="InterPro" id="IPR029033">
    <property type="entry name" value="His_PPase_superfam"/>
</dbReference>
<dbReference type="InterPro" id="IPR050275">
    <property type="entry name" value="PGM_Phosphatase"/>
</dbReference>
<dbReference type="PANTHER" id="PTHR48100">
    <property type="entry name" value="BROAD-SPECIFICITY PHOSPHATASE YOR283W-RELATED"/>
    <property type="match status" value="1"/>
</dbReference>
<dbReference type="PANTHER" id="PTHR48100:SF1">
    <property type="entry name" value="HISTIDINE PHOSPHATASE FAMILY PROTEIN-RELATED"/>
    <property type="match status" value="1"/>
</dbReference>
<dbReference type="Pfam" id="PF00300">
    <property type="entry name" value="His_Phos_1"/>
    <property type="match status" value="1"/>
</dbReference>
<dbReference type="SMART" id="SM00855">
    <property type="entry name" value="PGAM"/>
    <property type="match status" value="1"/>
</dbReference>
<dbReference type="SUPFAM" id="SSF53254">
    <property type="entry name" value="Phosphoglycerate mutase-like"/>
    <property type="match status" value="1"/>
</dbReference>
<dbReference type="PROSITE" id="PS00175">
    <property type="entry name" value="PG_MUTASE"/>
    <property type="match status" value="1"/>
</dbReference>
<organism>
    <name type="scientific">Arthroderma benhamiae (strain ATCC MYA-4681 / CBS 112371)</name>
    <name type="common">Trichophyton mentagrophytes</name>
    <dbReference type="NCBI Taxonomy" id="663331"/>
    <lineage>
        <taxon>Eukaryota</taxon>
        <taxon>Fungi</taxon>
        <taxon>Dikarya</taxon>
        <taxon>Ascomycota</taxon>
        <taxon>Pezizomycotina</taxon>
        <taxon>Eurotiomycetes</taxon>
        <taxon>Eurotiomycetidae</taxon>
        <taxon>Onygenales</taxon>
        <taxon>Arthrodermataceae</taxon>
        <taxon>Trichophyton</taxon>
    </lineage>
</organism>
<proteinExistence type="evidence at protein level"/>
<keyword id="KW-0413">Isomerase</keyword>
<keyword id="KW-1185">Reference proteome</keyword>
<keyword id="KW-0964">Secreted</keyword>
<keyword id="KW-0732">Signal</keyword>
<reference key="1">
    <citation type="journal article" date="2011" name="Genome Biol.">
        <title>Comparative and functional genomics provide insights into the pathogenicity of dermatophytic fungi.</title>
        <authorList>
            <person name="Burmester A."/>
            <person name="Shelest E."/>
            <person name="Gloeckner G."/>
            <person name="Heddergott C."/>
            <person name="Schindler S."/>
            <person name="Staib P."/>
            <person name="Heidel A."/>
            <person name="Felder M."/>
            <person name="Petzold A."/>
            <person name="Szafranski K."/>
            <person name="Feuermann M."/>
            <person name="Pedruzzi I."/>
            <person name="Priebe S."/>
            <person name="Groth M."/>
            <person name="Winkler R."/>
            <person name="Li W."/>
            <person name="Kniemeyer O."/>
            <person name="Schroeckh V."/>
            <person name="Hertweck C."/>
            <person name="Hube B."/>
            <person name="White T.C."/>
            <person name="Platzer M."/>
            <person name="Guthke R."/>
            <person name="Heitman J."/>
            <person name="Woestemeyer J."/>
            <person name="Zipfel P.F."/>
            <person name="Monod M."/>
            <person name="Brakhage A.A."/>
        </authorList>
    </citation>
    <scope>NUCLEOTIDE SEQUENCE [LARGE SCALE GENOMIC DNA]</scope>
    <source>
        <strain>ATCC MYA-4681 / CBS 112371</strain>
    </source>
</reference>
<reference key="2">
    <citation type="journal article" date="2011" name="Proteomics">
        <title>Identification of novel secreted proteases during extracellular proteolysis by dermatophytes at acidic pH.</title>
        <authorList>
            <person name="Sriranganadane D."/>
            <person name="Waridel P."/>
            <person name="Salamin K."/>
            <person name="Feuermann M."/>
            <person name="Mignon B."/>
            <person name="Staib P."/>
            <person name="Neuhaus J.M."/>
            <person name="Quadroni M."/>
            <person name="Monod M."/>
        </authorList>
    </citation>
    <scope>IDENTIFICATION BY MASS SPECTROMETRY</scope>
    <scope>SUBCELLULAR LOCATION</scope>
</reference>
<comment type="function">
    <text evidence="1">Probable phosphomutase that may have a function related to the manipulation of phosphate groups on carbohydrates.</text>
</comment>
<comment type="subcellular location">
    <subcellularLocation>
        <location evidence="4">Secreted</location>
    </subcellularLocation>
</comment>
<comment type="similarity">
    <text evidence="5">Belongs to the phosphoglycerate mutase family.</text>
</comment>
<sequence length="335" mass="37547">MAGRILLGLTLLATSLPLLAMGDAAVVPCISYSTVPGYFLQDDPAVDPKTFDYAKEGFGLIDQAYDTDETLDAELKKLPWRRFEHKVRSLNKHAASNVRFAVLFLGRHGQGFHNVAEAYYGTKAWDDYWSKLDGDGTITWSDAHLTEEGISQAKVARDTWAGQMKNSIPLPEVYYTSPLDRCLATAKFTFSKLELPPSKPFIPTVKELLRETLGVHTCDRRSSRNYIESTYPTYKIEPGFTQKDMLWDPEVRESDSDRDARLKKLLDDIFSHDKSTFMSLTAHGGAIRSILNVIGHREFGLQTGAVIPVLIRIETSTDAPEDPEEDLTIKIQGLN</sequence>
<protein>
    <recommendedName>
        <fullName evidence="5">Probable phosphoglycerate mutase ARB_03491</fullName>
        <ecNumber evidence="5">5.4.-.-</ecNumber>
    </recommendedName>
</protein>
<accession>D4B4V1</accession>
<gene>
    <name type="ORF">ARB_03491</name>
</gene>
<feature type="signal peptide" evidence="3">
    <location>
        <begin position="1"/>
        <end position="24"/>
    </location>
</feature>
<feature type="chain" id="PRO_5003054518" description="Probable phosphoglycerate mutase ARB_03491">
    <location>
        <begin position="25"/>
        <end position="335"/>
    </location>
</feature>
<feature type="active site" description="Tele-phosphohistidine intermediate" evidence="2">
    <location>
        <position position="108"/>
    </location>
</feature>
<feature type="active site" description="Proton donor/acceptor" evidence="2">
    <location>
        <position position="211"/>
    </location>
</feature>
<feature type="site" description="Transition state stabilizer" evidence="2">
    <location>
        <position position="283"/>
    </location>
</feature>